<reference key="1">
    <citation type="journal article" date="2002" name="Proc. Natl. Acad. Sci. U.S.A.">
        <title>Extensive mosaic structure revealed by the complete genome sequence of uropathogenic Escherichia coli.</title>
        <authorList>
            <person name="Welch R.A."/>
            <person name="Burland V."/>
            <person name="Plunkett G. III"/>
            <person name="Redford P."/>
            <person name="Roesch P."/>
            <person name="Rasko D."/>
            <person name="Buckles E.L."/>
            <person name="Liou S.-R."/>
            <person name="Boutin A."/>
            <person name="Hackett J."/>
            <person name="Stroud D."/>
            <person name="Mayhew G.F."/>
            <person name="Rose D.J."/>
            <person name="Zhou S."/>
            <person name="Schwartz D.C."/>
            <person name="Perna N.T."/>
            <person name="Mobley H.L.T."/>
            <person name="Donnenberg M.S."/>
            <person name="Blattner F.R."/>
        </authorList>
    </citation>
    <scope>NUCLEOTIDE SEQUENCE [LARGE SCALE GENOMIC DNA]</scope>
    <source>
        <strain>CFT073 / ATCC 700928 / UPEC</strain>
    </source>
</reference>
<organism>
    <name type="scientific">Escherichia coli O6:H1 (strain CFT073 / ATCC 700928 / UPEC)</name>
    <dbReference type="NCBI Taxonomy" id="199310"/>
    <lineage>
        <taxon>Bacteria</taxon>
        <taxon>Pseudomonadati</taxon>
        <taxon>Pseudomonadota</taxon>
        <taxon>Gammaproteobacteria</taxon>
        <taxon>Enterobacterales</taxon>
        <taxon>Enterobacteriaceae</taxon>
        <taxon>Escherichia</taxon>
    </lineage>
</organism>
<protein>
    <recommendedName>
        <fullName evidence="1">Molybdenum import ATP-binding protein ModC</fullName>
        <ecNumber evidence="1">7.3.2.5</ecNumber>
    </recommendedName>
</protein>
<evidence type="ECO:0000255" key="1">
    <source>
        <dbReference type="HAMAP-Rule" id="MF_01705"/>
    </source>
</evidence>
<evidence type="ECO:0000255" key="2">
    <source>
        <dbReference type="PROSITE-ProRule" id="PRU01213"/>
    </source>
</evidence>
<keyword id="KW-0067">ATP-binding</keyword>
<keyword id="KW-0997">Cell inner membrane</keyword>
<keyword id="KW-1003">Cell membrane</keyword>
<keyword id="KW-0472">Membrane</keyword>
<keyword id="KW-0500">Molybdenum</keyword>
<keyword id="KW-0547">Nucleotide-binding</keyword>
<keyword id="KW-1185">Reference proteome</keyword>
<keyword id="KW-1278">Translocase</keyword>
<keyword id="KW-0813">Transport</keyword>
<dbReference type="EC" id="7.3.2.5" evidence="1"/>
<dbReference type="EMBL" id="AE014075">
    <property type="protein sequence ID" value="AAN79315.1"/>
    <property type="molecule type" value="Genomic_DNA"/>
</dbReference>
<dbReference type="RefSeq" id="WP_000891665.1">
    <property type="nucleotide sequence ID" value="NZ_CP051263.1"/>
</dbReference>
<dbReference type="SMR" id="Q8FJR4"/>
<dbReference type="STRING" id="199310.c0842"/>
<dbReference type="KEGG" id="ecc:c0842"/>
<dbReference type="eggNOG" id="COG4148">
    <property type="taxonomic scope" value="Bacteria"/>
</dbReference>
<dbReference type="HOGENOM" id="CLU_000604_1_1_6"/>
<dbReference type="BioCyc" id="ECOL199310:C0842-MONOMER"/>
<dbReference type="Proteomes" id="UP000001410">
    <property type="component" value="Chromosome"/>
</dbReference>
<dbReference type="GO" id="GO:0005886">
    <property type="term" value="C:plasma membrane"/>
    <property type="evidence" value="ECO:0007669"/>
    <property type="project" value="UniProtKB-SubCell"/>
</dbReference>
<dbReference type="GO" id="GO:0015412">
    <property type="term" value="F:ABC-type molybdate transporter activity"/>
    <property type="evidence" value="ECO:0007669"/>
    <property type="project" value="UniProtKB-EC"/>
</dbReference>
<dbReference type="GO" id="GO:0005524">
    <property type="term" value="F:ATP binding"/>
    <property type="evidence" value="ECO:0007669"/>
    <property type="project" value="UniProtKB-KW"/>
</dbReference>
<dbReference type="GO" id="GO:0016887">
    <property type="term" value="F:ATP hydrolysis activity"/>
    <property type="evidence" value="ECO:0007669"/>
    <property type="project" value="InterPro"/>
</dbReference>
<dbReference type="FunFam" id="2.40.50.100:FF:000037">
    <property type="entry name" value="Molybdenum import ATP-binding protein ModC"/>
    <property type="match status" value="1"/>
</dbReference>
<dbReference type="FunFam" id="3.40.50.300:FF:000634">
    <property type="entry name" value="Molybdenum import ATP-binding protein ModC"/>
    <property type="match status" value="1"/>
</dbReference>
<dbReference type="Gene3D" id="2.40.50.100">
    <property type="match status" value="1"/>
</dbReference>
<dbReference type="Gene3D" id="3.40.50.300">
    <property type="entry name" value="P-loop containing nucleotide triphosphate hydrolases"/>
    <property type="match status" value="1"/>
</dbReference>
<dbReference type="InterPro" id="IPR003593">
    <property type="entry name" value="AAA+_ATPase"/>
</dbReference>
<dbReference type="InterPro" id="IPR003439">
    <property type="entry name" value="ABC_transporter-like_ATP-bd"/>
</dbReference>
<dbReference type="InterPro" id="IPR017871">
    <property type="entry name" value="ABC_transporter-like_CS"/>
</dbReference>
<dbReference type="InterPro" id="IPR008995">
    <property type="entry name" value="Mo/tungstate-bd_C_term_dom"/>
</dbReference>
<dbReference type="InterPro" id="IPR011868">
    <property type="entry name" value="ModC_ABC_ATP-bd"/>
</dbReference>
<dbReference type="InterPro" id="IPR050334">
    <property type="entry name" value="Molybdenum_import_ModC"/>
</dbReference>
<dbReference type="InterPro" id="IPR004606">
    <property type="entry name" value="Mop_domain"/>
</dbReference>
<dbReference type="InterPro" id="IPR027417">
    <property type="entry name" value="P-loop_NTPase"/>
</dbReference>
<dbReference type="InterPro" id="IPR005116">
    <property type="entry name" value="Transp-assoc_OB_typ1"/>
</dbReference>
<dbReference type="NCBIfam" id="TIGR02142">
    <property type="entry name" value="modC_ABC"/>
    <property type="match status" value="1"/>
</dbReference>
<dbReference type="NCBIfam" id="TIGR00638">
    <property type="entry name" value="Mop"/>
    <property type="match status" value="1"/>
</dbReference>
<dbReference type="NCBIfam" id="NF008355">
    <property type="entry name" value="PRK11144.1"/>
    <property type="match status" value="1"/>
</dbReference>
<dbReference type="PANTHER" id="PTHR43514">
    <property type="entry name" value="ABC TRANSPORTER I FAMILY MEMBER 10"/>
    <property type="match status" value="1"/>
</dbReference>
<dbReference type="PANTHER" id="PTHR43514:SF4">
    <property type="entry name" value="ABC TRANSPORTER I FAMILY MEMBER 10"/>
    <property type="match status" value="1"/>
</dbReference>
<dbReference type="Pfam" id="PF00005">
    <property type="entry name" value="ABC_tran"/>
    <property type="match status" value="1"/>
</dbReference>
<dbReference type="Pfam" id="PF03459">
    <property type="entry name" value="TOBE"/>
    <property type="match status" value="1"/>
</dbReference>
<dbReference type="SMART" id="SM00382">
    <property type="entry name" value="AAA"/>
    <property type="match status" value="1"/>
</dbReference>
<dbReference type="SUPFAM" id="SSF50331">
    <property type="entry name" value="MOP-like"/>
    <property type="match status" value="1"/>
</dbReference>
<dbReference type="SUPFAM" id="SSF52540">
    <property type="entry name" value="P-loop containing nucleoside triphosphate hydrolases"/>
    <property type="match status" value="1"/>
</dbReference>
<dbReference type="PROSITE" id="PS00211">
    <property type="entry name" value="ABC_TRANSPORTER_1"/>
    <property type="match status" value="1"/>
</dbReference>
<dbReference type="PROSITE" id="PS50893">
    <property type="entry name" value="ABC_TRANSPORTER_2"/>
    <property type="match status" value="1"/>
</dbReference>
<dbReference type="PROSITE" id="PS51241">
    <property type="entry name" value="MODC"/>
    <property type="match status" value="1"/>
</dbReference>
<dbReference type="PROSITE" id="PS51866">
    <property type="entry name" value="MOP"/>
    <property type="match status" value="1"/>
</dbReference>
<comment type="function">
    <text evidence="1">Part of the ABC transporter complex ModABC involved in molybdenum import. Responsible for energy coupling to the transport system.</text>
</comment>
<comment type="catalytic activity">
    <reaction evidence="1">
        <text>molybdate(out) + ATP + H2O = molybdate(in) + ADP + phosphate + H(+)</text>
        <dbReference type="Rhea" id="RHEA:22020"/>
        <dbReference type="ChEBI" id="CHEBI:15377"/>
        <dbReference type="ChEBI" id="CHEBI:15378"/>
        <dbReference type="ChEBI" id="CHEBI:30616"/>
        <dbReference type="ChEBI" id="CHEBI:36264"/>
        <dbReference type="ChEBI" id="CHEBI:43474"/>
        <dbReference type="ChEBI" id="CHEBI:456216"/>
        <dbReference type="EC" id="7.3.2.5"/>
    </reaction>
</comment>
<comment type="subunit">
    <text evidence="1">The complex is composed of two ATP-binding proteins (ModC), two transmembrane proteins (ModB) and a solute-binding protein (ModA).</text>
</comment>
<comment type="subcellular location">
    <subcellularLocation>
        <location evidence="1">Cell inner membrane</location>
        <topology evidence="1">Peripheral membrane protein</topology>
    </subcellularLocation>
</comment>
<comment type="similarity">
    <text evidence="1">Belongs to the ABC transporter superfamily. Molybdate importer (TC 3.A.1.8) family.</text>
</comment>
<proteinExistence type="inferred from homology"/>
<sequence>MLELNFSQTLGNHCLTINETLPANGITAIFGVSGAGKTSLINAISGLTRPQKGRIVLNGRVLNDADKGICLTPEKRRVGYVFQDARLFPHYKVRGNLRYGMAKSMVNQFDKLVALLGIEPLLDRLPGSLSGGEKQRVAIGRALLTAPELLLLDEPLASLDIPRKRELLPYLQRLTREINIPMLYVSHSLDEILHLADRVMVLENGQVKAFGALEEVWGSSVMNPWLPKEQQSSILKVTVLEHHPHYAMTALALGDQHLWVNKLEEPLQAALRIRIQASDVSLVLQPPQQTSIRNVLRAKVVNSYDDNGQVEVELEVGGKTLWARISPWARDELAIKPGLWLYAQIKSVSITA</sequence>
<name>MODC_ECOL6</name>
<feature type="chain" id="PRO_0000092538" description="Molybdenum import ATP-binding protein ModC">
    <location>
        <begin position="1"/>
        <end position="352"/>
    </location>
</feature>
<feature type="domain" description="ABC transporter" evidence="1">
    <location>
        <begin position="1"/>
        <end position="229"/>
    </location>
</feature>
<feature type="domain" description="Mop" evidence="2">
    <location>
        <begin position="289"/>
        <end position="352"/>
    </location>
</feature>
<feature type="binding site" evidence="1">
    <location>
        <begin position="31"/>
        <end position="38"/>
    </location>
    <ligand>
        <name>ATP</name>
        <dbReference type="ChEBI" id="CHEBI:30616"/>
    </ligand>
</feature>
<gene>
    <name evidence="1" type="primary">modC</name>
    <name type="ordered locus">c0842</name>
</gene>
<accession>Q8FJR4</accession>